<accession>Q95247</accession>
<reference key="1">
    <citation type="journal article" date="1998" name="J. Neuroimmunol.">
        <title>The porcine mu opioid receptor: molecular cloning and mRNA distribution in lymphoid tissues.</title>
        <authorList>
            <person name="Pampusch M.S."/>
            <person name="Osinski M.A."/>
            <person name="Brown D.R."/>
            <person name="Murtaugh M.P."/>
        </authorList>
    </citation>
    <scope>NUCLEOTIDE SEQUENCE [MRNA]</scope>
    <source>
        <tissue>Brain cortex</tissue>
    </source>
</reference>
<reference key="2">
    <citation type="submission" date="2002-06" db="EMBL/GenBank/DDBJ databases">
        <title>SNPs in the mu opioid receptor of sows.</title>
        <authorList>
            <person name="Li J."/>
            <person name="Bao J."/>
            <person name="Cui W."/>
        </authorList>
    </citation>
    <scope>NUCLEOTIDE SEQUENCE [MRNA]</scope>
</reference>
<dbReference type="EMBL" id="L38645">
    <property type="protein sequence ID" value="AAB53770.1"/>
    <property type="molecule type" value="mRNA"/>
</dbReference>
<dbReference type="EMBL" id="AF521309">
    <property type="protein sequence ID" value="AAM77351.1"/>
    <property type="molecule type" value="mRNA"/>
</dbReference>
<dbReference type="RefSeq" id="NP_001001538.1">
    <property type="nucleotide sequence ID" value="NM_001001538.1"/>
</dbReference>
<dbReference type="SMR" id="Q95247"/>
<dbReference type="FunCoup" id="Q95247">
    <property type="interactions" value="260"/>
</dbReference>
<dbReference type="STRING" id="9823.ENSSSCP00000004401"/>
<dbReference type="GlyCosmos" id="Q95247">
    <property type="glycosylation" value="5 sites, No reported glycans"/>
</dbReference>
<dbReference type="GlyGen" id="Q95247">
    <property type="glycosylation" value="5 sites"/>
</dbReference>
<dbReference type="PaxDb" id="9823-ENSSSCP00000004401"/>
<dbReference type="GeneID" id="396802"/>
<dbReference type="KEGG" id="ssc:396802"/>
<dbReference type="CTD" id="4988"/>
<dbReference type="eggNOG" id="KOG3656">
    <property type="taxonomic scope" value="Eukaryota"/>
</dbReference>
<dbReference type="InParanoid" id="Q95247"/>
<dbReference type="OrthoDB" id="6076970at2759"/>
<dbReference type="ChiTaRS" id="OPRM1">
    <property type="organism name" value="pig"/>
</dbReference>
<dbReference type="Proteomes" id="UP000008227">
    <property type="component" value="Unplaced"/>
</dbReference>
<dbReference type="Proteomes" id="UP000314985">
    <property type="component" value="Unplaced"/>
</dbReference>
<dbReference type="Proteomes" id="UP000694570">
    <property type="component" value="Unplaced"/>
</dbReference>
<dbReference type="Proteomes" id="UP000694571">
    <property type="component" value="Unplaced"/>
</dbReference>
<dbReference type="Proteomes" id="UP000694720">
    <property type="component" value="Unplaced"/>
</dbReference>
<dbReference type="Proteomes" id="UP000694722">
    <property type="component" value="Unplaced"/>
</dbReference>
<dbReference type="Proteomes" id="UP000694723">
    <property type="component" value="Unplaced"/>
</dbReference>
<dbReference type="Proteomes" id="UP000694724">
    <property type="component" value="Unplaced"/>
</dbReference>
<dbReference type="Proteomes" id="UP000694725">
    <property type="component" value="Unplaced"/>
</dbReference>
<dbReference type="Proteomes" id="UP000694726">
    <property type="component" value="Unplaced"/>
</dbReference>
<dbReference type="Proteomes" id="UP000694727">
    <property type="component" value="Unplaced"/>
</dbReference>
<dbReference type="Proteomes" id="UP000694728">
    <property type="component" value="Unplaced"/>
</dbReference>
<dbReference type="GO" id="GO:0030424">
    <property type="term" value="C:axon"/>
    <property type="evidence" value="ECO:0000250"/>
    <property type="project" value="UniProtKB"/>
</dbReference>
<dbReference type="GO" id="GO:0030425">
    <property type="term" value="C:dendrite"/>
    <property type="evidence" value="ECO:0000250"/>
    <property type="project" value="UniProtKB"/>
</dbReference>
<dbReference type="GO" id="GO:0005768">
    <property type="term" value="C:endosome"/>
    <property type="evidence" value="ECO:0000250"/>
    <property type="project" value="UniProtKB"/>
</dbReference>
<dbReference type="GO" id="GO:0043005">
    <property type="term" value="C:neuron projection"/>
    <property type="evidence" value="ECO:0000318"/>
    <property type="project" value="GO_Central"/>
</dbReference>
<dbReference type="GO" id="GO:0043204">
    <property type="term" value="C:perikaryon"/>
    <property type="evidence" value="ECO:0007669"/>
    <property type="project" value="UniProtKB-SubCell"/>
</dbReference>
<dbReference type="GO" id="GO:0005886">
    <property type="term" value="C:plasma membrane"/>
    <property type="evidence" value="ECO:0000250"/>
    <property type="project" value="UniProtKB"/>
</dbReference>
<dbReference type="GO" id="GO:0045202">
    <property type="term" value="C:synapse"/>
    <property type="evidence" value="ECO:0007669"/>
    <property type="project" value="GOC"/>
</dbReference>
<dbReference type="GO" id="GO:0004979">
    <property type="term" value="F:beta-endorphin receptor activity"/>
    <property type="evidence" value="ECO:0000318"/>
    <property type="project" value="GO_Central"/>
</dbReference>
<dbReference type="GO" id="GO:0004930">
    <property type="term" value="F:G protein-coupled receptor activity"/>
    <property type="evidence" value="ECO:0000250"/>
    <property type="project" value="UniProtKB"/>
</dbReference>
<dbReference type="GO" id="GO:0001965">
    <property type="term" value="F:G-protein alpha-subunit binding"/>
    <property type="evidence" value="ECO:0000250"/>
    <property type="project" value="UniProtKB"/>
</dbReference>
<dbReference type="GO" id="GO:0031681">
    <property type="term" value="F:G-protein beta-subunit binding"/>
    <property type="evidence" value="ECO:0000318"/>
    <property type="project" value="GO_Central"/>
</dbReference>
<dbReference type="GO" id="GO:0038047">
    <property type="term" value="F:morphine receptor activity"/>
    <property type="evidence" value="ECO:0000250"/>
    <property type="project" value="UniProtKB"/>
</dbReference>
<dbReference type="GO" id="GO:0042923">
    <property type="term" value="F:neuropeptide binding"/>
    <property type="evidence" value="ECO:0000318"/>
    <property type="project" value="GO_Central"/>
</dbReference>
<dbReference type="GO" id="GO:0005245">
    <property type="term" value="F:voltage-gated calcium channel activity"/>
    <property type="evidence" value="ECO:0000250"/>
    <property type="project" value="UniProtKB"/>
</dbReference>
<dbReference type="GO" id="GO:0007197">
    <property type="term" value="P:adenylate cyclase-inhibiting G protein-coupled acetylcholine receptor signaling pathway"/>
    <property type="evidence" value="ECO:0000250"/>
    <property type="project" value="UniProtKB"/>
</dbReference>
<dbReference type="GO" id="GO:0007193">
    <property type="term" value="P:adenylate cyclase-inhibiting G protein-coupled receptor signaling pathway"/>
    <property type="evidence" value="ECO:0000250"/>
    <property type="project" value="UniProtKB"/>
</dbReference>
<dbReference type="GO" id="GO:0038003">
    <property type="term" value="P:G protein-coupled opioid receptor signaling pathway"/>
    <property type="evidence" value="ECO:0000250"/>
    <property type="project" value="UniProtKB"/>
</dbReference>
<dbReference type="GO" id="GO:0051481">
    <property type="term" value="P:negative regulation of cytosolic calcium ion concentration"/>
    <property type="evidence" value="ECO:0000250"/>
    <property type="project" value="UniProtKB"/>
</dbReference>
<dbReference type="GO" id="GO:0045019">
    <property type="term" value="P:negative regulation of nitric oxide biosynthetic process"/>
    <property type="evidence" value="ECO:0000250"/>
    <property type="project" value="UniProtKB"/>
</dbReference>
<dbReference type="GO" id="GO:0061358">
    <property type="term" value="P:negative regulation of Wnt protein secretion"/>
    <property type="evidence" value="ECO:0000250"/>
    <property type="project" value="UniProtKB"/>
</dbReference>
<dbReference type="GO" id="GO:0007218">
    <property type="term" value="P:neuropeptide signaling pathway"/>
    <property type="evidence" value="ECO:0000318"/>
    <property type="project" value="GO_Central"/>
</dbReference>
<dbReference type="GO" id="GO:0007200">
    <property type="term" value="P:phospholipase C-activating G protein-coupled receptor signaling pathway"/>
    <property type="evidence" value="ECO:0000250"/>
    <property type="project" value="UniProtKB"/>
</dbReference>
<dbReference type="GO" id="GO:0070374">
    <property type="term" value="P:positive regulation of ERK1 and ERK2 cascade"/>
    <property type="evidence" value="ECO:0000250"/>
    <property type="project" value="UniProtKB"/>
</dbReference>
<dbReference type="GO" id="GO:0050769">
    <property type="term" value="P:positive regulation of neurogenesis"/>
    <property type="evidence" value="ECO:0000250"/>
    <property type="project" value="UniProtKB"/>
</dbReference>
<dbReference type="GO" id="GO:2000310">
    <property type="term" value="P:regulation of NMDA receptor activity"/>
    <property type="evidence" value="ECO:0000250"/>
    <property type="project" value="UniProtKB"/>
</dbReference>
<dbReference type="GO" id="GO:0019233">
    <property type="term" value="P:sensory perception of pain"/>
    <property type="evidence" value="ECO:0000250"/>
    <property type="project" value="UniProtKB"/>
</dbReference>
<dbReference type="CDD" id="cd15090">
    <property type="entry name" value="7tmA_Mu_opioid_R"/>
    <property type="match status" value="1"/>
</dbReference>
<dbReference type="FunFam" id="1.20.1070.10:FF:000014">
    <property type="entry name" value="Kappa-type opioid receptor 1"/>
    <property type="match status" value="1"/>
</dbReference>
<dbReference type="Gene3D" id="1.20.1070.10">
    <property type="entry name" value="Rhodopsin 7-helix transmembrane proteins"/>
    <property type="match status" value="1"/>
</dbReference>
<dbReference type="InterPro" id="IPR000276">
    <property type="entry name" value="GPCR_Rhodpsn"/>
</dbReference>
<dbReference type="InterPro" id="IPR017452">
    <property type="entry name" value="GPCR_Rhodpsn_7TM"/>
</dbReference>
<dbReference type="InterPro" id="IPR000105">
    <property type="entry name" value="Mu_opioid_rcpt"/>
</dbReference>
<dbReference type="InterPro" id="IPR001418">
    <property type="entry name" value="Opioid_rcpt"/>
</dbReference>
<dbReference type="PANTHER" id="PTHR24229:SF7">
    <property type="entry name" value="MU-TYPE OPIOID RECEPTOR"/>
    <property type="match status" value="1"/>
</dbReference>
<dbReference type="PANTHER" id="PTHR24229">
    <property type="entry name" value="NEUROPEPTIDES RECEPTOR"/>
    <property type="match status" value="1"/>
</dbReference>
<dbReference type="Pfam" id="PF00001">
    <property type="entry name" value="7tm_1"/>
    <property type="match status" value="1"/>
</dbReference>
<dbReference type="PRINTS" id="PR00237">
    <property type="entry name" value="GPCRRHODOPSN"/>
</dbReference>
<dbReference type="PRINTS" id="PR00537">
    <property type="entry name" value="MUOPIOIDR"/>
</dbReference>
<dbReference type="PRINTS" id="PR00384">
    <property type="entry name" value="OPIOIDR"/>
</dbReference>
<dbReference type="SUPFAM" id="SSF81321">
    <property type="entry name" value="Family A G protein-coupled receptor-like"/>
    <property type="match status" value="1"/>
</dbReference>
<dbReference type="PROSITE" id="PS00237">
    <property type="entry name" value="G_PROTEIN_RECEP_F1_1"/>
    <property type="match status" value="1"/>
</dbReference>
<dbReference type="PROSITE" id="PS50262">
    <property type="entry name" value="G_PROTEIN_RECEP_F1_2"/>
    <property type="match status" value="1"/>
</dbReference>
<comment type="function">
    <text evidence="1 2 3">Receptor for endogenous opioids such as beta-endorphin and endomorphin. Receptor for natural and synthetic opioids including morphine, heroin, DAMGO, fentanyl, etorphine, buprenorphin and methadone. Also activated by enkephalin peptides, such as Met-enkephalin or Met-enkephalin-Arg-Phe, with higher affinity for Met-enkephalin-Arg-Phe. Agonist binding to the receptor induces coupling to an inactive GDP-bound heterotrimeric G-protein complex and subsequent exchange of GDP for GTP in the G-protein alpha subunit leading to dissociation of the G-protein complex with the free GTP-bound G-protein alpha and the G-protein beta-gamma dimer activating downstream cellular effectors. The agonist- and cell type-specific activity is predominantly coupled to pertussis toxin-sensitive G(i) and G(o) G alpha proteins, GNAI1, GNAI2, GNAI3 and GNAO1, and to a lesser extent to pertussis toxin-insensitive G alpha proteins GNAZ and GNA15. They mediate an array of downstream cellular responses, including inhibition of adenylate cyclase activity and both N-type and L-type calcium channels, activation of inward rectifying potassium channels, mitogen-activated protein kinase (MAPK), phospholipase C (PLC), phosphoinositide/protein kinase (PKC), phosphoinositide 3-kinase (PI3K) and regulation of NF-kappa-B. Also couples to adenylate cyclase stimulatory G alpha proteins. The selective temporal coupling to G-proteins and subsequent signaling can be regulated by RGSZ proteins, such as RGS9, RGS17 and RGS4. Phosphorylation by members of the GPRK subfamily of Ser/Thr protein kinases and association with beta-arrestins is involved in short-term receptor desensitization. Beta-arrestins associate with the GPRK-phosphorylated receptor and uncouple it from the G-protein thus terminating signal transduction. The phosphorylated receptor is internalized through endocytosis via clathrin-coated pits which involves beta-arrestins. The activation of the ERK pathway occurs either in a G-protein-dependent or a beta-arrestin-dependent manner and is regulated by agonist-specific receptor phosphorylation. Acts as a class A G-protein coupled receptor (GPCR) which dissociates from beta-arrestin at or near the plasma membrane and undergoes rapid recycling. Receptor down-regulation pathways are varying with the agonist and occur dependent or independent of G-protein coupling. Endogenous ligands induce rapid desensitization, endocytosis and recycling. Heterooligomerization with other GPCRs can modulate agonist binding, signaling and trafficking properties. Involved in neurogenesis.</text>
</comment>
<comment type="subunit">
    <text evidence="1 2 3">Forms homooligomers and heterooligomers with other GPCRs, such as OPRD1, OPRK1, OPRL1, NPFFR2, ADRA2A, SSTR2, CNR1 and CCR5 (probably in dimeric forms). Interacts with heterotrimeric G proteins; interaction with a heterotrimeric complex containing GNAI1, GNB1 and GNG2 stabilizes the active conformation of the receptor and increases its affinity for endomorphin-2, the synthetic opioid peptide DAMGO and for morphinan agonists (By similarity). Interacts with PPL; the interaction disrupts agonist-mediated G-protein activation. Interacts (via C-terminus) with DNAJB4 (via C-terminus). Interacts with calmodulin; the interaction inhibits the constitutive activity of OPRM1; it abolishes basal and attenuates agonist-stimulated G-protein coupling. Interacts with FLNA, PLD2, RANBP9 and WLS and GPM6A (By similarity). Interacts with RTP4 (By similarity). Interacts with SYP and GNAS (By similarity). Interacts with RGS9, RGS17, RGS20, RGS4, PPP1R9B and HINT1.</text>
</comment>
<comment type="subcellular location">
    <subcellularLocation>
        <location evidence="3">Cell membrane</location>
        <topology evidence="3">Multi-pass membrane protein</topology>
    </subcellularLocation>
    <subcellularLocation>
        <location evidence="4">Cell projection</location>
        <location evidence="4">Axon</location>
    </subcellularLocation>
    <subcellularLocation>
        <location evidence="4">Perikaryon</location>
    </subcellularLocation>
    <subcellularLocation>
        <location evidence="4">Cell projection</location>
        <location evidence="4">Dendrite</location>
    </subcellularLocation>
    <subcellularLocation>
        <location evidence="4">Endosome</location>
    </subcellularLocation>
    <text evidence="4">Is rapidly internalized after agonist binding.</text>
</comment>
<comment type="PTM">
    <text evidence="1">Phosphorylated. Differentially phosphorylated in basal and agonist-induced conditions. Agonist-mediated phosphorylation modulates receptor internalization. Phosphorylated by GRK2 in a agonist-dependent manner. Phosphorylation at Tyr-169 requires receptor activation, is dependent on non-receptor protein tyrosine kinase Src and results in a decrease in agonist efficacy by reducing G-protein coupling efficiency. Phosphorylated on tyrosine residues; the phosphorylation is involved in agonist-induced G-protein-independent receptor down-regulation. Phosphorylation at Ser-378 is involved in G-protein-dependent but not beta-arrestin-dependent activation of the ERK pathway (By similarity).</text>
</comment>
<comment type="PTM">
    <text evidence="3">Ubiquitinated. A basal ubiquitination seems not to be related to degradation. Ubiquitination is increased upon formation of OPRM1:OPRD1 oligomers leading to proteasomal degradation; the ubiquitination is diminished by RTP4.</text>
</comment>
<comment type="similarity">
    <text evidence="6">Belongs to the G-protein coupled receptor 1 family.</text>
</comment>
<sequence>MDSSADPRNASNCTDPFSPSSMCSPVPSPSSWVNFSHLEGNLSDPCIRNRTELGGSDSLCPPTGSPSMVTAITIMALYSIVCVVGLFGNFLVMYVIVRYTKMKTATNIYIFNLALADALATSTLPFQSVNYLMGTWPFGTILCKIVISIDYYNMFTSIFTLCTMSVDRYIAVCHPVKALDFRTPRNAKIINVCNWILSSAIGLPVMFMATTKYRNGSIDCALTFSHPTWYWENLLKICVFIFAFIMPVLIITVCYGLMILRLKSVRMLSGSKEKDRNLRRITRMVLVVVAVFIVCWTPIHIYVIIKALITIPETTFQTVSWHFCIALGYTNSCLNPVLYAFLDENFKRCFREFCIPTSSTIEQQNSARIRQNTRDHPSTANTVDRTNHQLENLEAETAPLP</sequence>
<name>OPRM_PIG</name>
<feature type="chain" id="PRO_0000069977" description="Mu-type opioid receptor">
    <location>
        <begin position="1"/>
        <end position="401"/>
    </location>
</feature>
<feature type="topological domain" description="Extracellular" evidence="3">
    <location>
        <begin position="1"/>
        <end position="69"/>
    </location>
</feature>
<feature type="transmembrane region" description="Helical; Name=1" evidence="3">
    <location>
        <begin position="70"/>
        <end position="94"/>
    </location>
</feature>
<feature type="topological domain" description="Cytoplasmic" evidence="3">
    <location>
        <begin position="95"/>
        <end position="107"/>
    </location>
</feature>
<feature type="transmembrane region" description="Helical; Name=2" evidence="3">
    <location>
        <begin position="108"/>
        <end position="132"/>
    </location>
</feature>
<feature type="topological domain" description="Extracellular" evidence="3">
    <location>
        <begin position="133"/>
        <end position="143"/>
    </location>
</feature>
<feature type="transmembrane region" description="Helical; Name=3" evidence="3">
    <location>
        <begin position="144"/>
        <end position="166"/>
    </location>
</feature>
<feature type="topological domain" description="Cytoplasmic" evidence="3">
    <location>
        <begin position="167"/>
        <end position="186"/>
    </location>
</feature>
<feature type="transmembrane region" description="Helical; Name=4" evidence="3">
    <location>
        <begin position="187"/>
        <end position="208"/>
    </location>
</feature>
<feature type="topological domain" description="Extracellular" evidence="3">
    <location>
        <begin position="209"/>
        <end position="231"/>
    </location>
</feature>
<feature type="transmembrane region" description="Helical; Name=5" evidence="3">
    <location>
        <begin position="232"/>
        <end position="256"/>
    </location>
</feature>
<feature type="topological domain" description="Cytoplasmic" evidence="3">
    <location>
        <begin position="257"/>
        <end position="280"/>
    </location>
</feature>
<feature type="transmembrane region" description="Helical; Name=6" evidence="3">
    <location>
        <begin position="281"/>
        <end position="307"/>
    </location>
</feature>
<feature type="topological domain" description="Extracellular" evidence="3">
    <location>
        <begin position="308"/>
        <end position="315"/>
    </location>
</feature>
<feature type="transmembrane region" description="Helical; Name=7" evidence="3">
    <location>
        <begin position="316"/>
        <end position="339"/>
    </location>
</feature>
<feature type="topological domain" description="Cytoplasmic" evidence="3">
    <location>
        <begin position="340"/>
        <end position="401"/>
    </location>
</feature>
<feature type="region of interest" description="Disordered" evidence="7">
    <location>
        <begin position="365"/>
        <end position="385"/>
    </location>
</feature>
<feature type="short sequence motif" description="NPxxY; plays a role in stabilizing the activated conformation of the receptor" evidence="3">
    <location>
        <begin position="335"/>
        <end position="339"/>
    </location>
</feature>
<feature type="modified residue" description="Phosphotyrosine" evidence="1">
    <location>
        <position position="169"/>
    </location>
</feature>
<feature type="modified residue" description="Phosphoserine" evidence="3">
    <location>
        <position position="366"/>
    </location>
</feature>
<feature type="modified residue" description="Phosphothreonine" evidence="1">
    <location>
        <position position="373"/>
    </location>
</feature>
<feature type="modified residue" description="Phosphoserine" evidence="1">
    <location>
        <position position="378"/>
    </location>
</feature>
<feature type="modified residue" description="Phosphothreonine" evidence="1">
    <location>
        <position position="397"/>
    </location>
</feature>
<feature type="lipid moiety-binding region" description="S-palmitoyl cysteine" evidence="5">
    <location>
        <position position="354"/>
    </location>
</feature>
<feature type="glycosylation site" description="N-linked (GlcNAc...) asparagine" evidence="5">
    <location>
        <position position="9"/>
    </location>
</feature>
<feature type="glycosylation site" description="N-linked (GlcNAc...) asparagine" evidence="5">
    <location>
        <position position="12"/>
    </location>
</feature>
<feature type="glycosylation site" description="N-linked (GlcNAc...) asparagine" evidence="5">
    <location>
        <position position="34"/>
    </location>
</feature>
<feature type="glycosylation site" description="N-linked (GlcNAc...) asparagine" evidence="5">
    <location>
        <position position="41"/>
    </location>
</feature>
<feature type="glycosylation site" description="N-linked (GlcNAc...) asparagine" evidence="5">
    <location>
        <position position="49"/>
    </location>
</feature>
<feature type="disulfide bond" evidence="6">
    <location>
        <begin position="143"/>
        <end position="220"/>
    </location>
</feature>
<evidence type="ECO:0000250" key="1">
    <source>
        <dbReference type="UniProtKB" id="P33535"/>
    </source>
</evidence>
<evidence type="ECO:0000250" key="2">
    <source>
        <dbReference type="UniProtKB" id="P35372"/>
    </source>
</evidence>
<evidence type="ECO:0000250" key="3">
    <source>
        <dbReference type="UniProtKB" id="P42866"/>
    </source>
</evidence>
<evidence type="ECO:0000250" key="4">
    <source>
        <dbReference type="UniProtKB" id="P97266"/>
    </source>
</evidence>
<evidence type="ECO:0000255" key="5"/>
<evidence type="ECO:0000255" key="6">
    <source>
        <dbReference type="PROSITE-ProRule" id="PRU00521"/>
    </source>
</evidence>
<evidence type="ECO:0000256" key="7">
    <source>
        <dbReference type="SAM" id="MobiDB-lite"/>
    </source>
</evidence>
<organism>
    <name type="scientific">Sus scrofa</name>
    <name type="common">Pig</name>
    <dbReference type="NCBI Taxonomy" id="9823"/>
    <lineage>
        <taxon>Eukaryota</taxon>
        <taxon>Metazoa</taxon>
        <taxon>Chordata</taxon>
        <taxon>Craniata</taxon>
        <taxon>Vertebrata</taxon>
        <taxon>Euteleostomi</taxon>
        <taxon>Mammalia</taxon>
        <taxon>Eutheria</taxon>
        <taxon>Laurasiatheria</taxon>
        <taxon>Artiodactyla</taxon>
        <taxon>Suina</taxon>
        <taxon>Suidae</taxon>
        <taxon>Sus</taxon>
    </lineage>
</organism>
<protein>
    <recommendedName>
        <fullName>Mu-type opioid receptor</fullName>
        <shortName>M-OR-1</shortName>
        <shortName>MOR-1</shortName>
    </recommendedName>
</protein>
<gene>
    <name type="primary">OPRM1</name>
</gene>
<keyword id="KW-1003">Cell membrane</keyword>
<keyword id="KW-0966">Cell projection</keyword>
<keyword id="KW-1015">Disulfide bond</keyword>
<keyword id="KW-0967">Endosome</keyword>
<keyword id="KW-0297">G-protein coupled receptor</keyword>
<keyword id="KW-0325">Glycoprotein</keyword>
<keyword id="KW-0449">Lipoprotein</keyword>
<keyword id="KW-0472">Membrane</keyword>
<keyword id="KW-0564">Palmitate</keyword>
<keyword id="KW-0597">Phosphoprotein</keyword>
<keyword id="KW-0675">Receptor</keyword>
<keyword id="KW-1185">Reference proteome</keyword>
<keyword id="KW-0807">Transducer</keyword>
<keyword id="KW-0812">Transmembrane</keyword>
<keyword id="KW-1133">Transmembrane helix</keyword>
<keyword id="KW-0832">Ubl conjugation</keyword>
<proteinExistence type="evidence at transcript level"/>